<dbReference type="EC" id="2.1.1.228" evidence="1"/>
<dbReference type="EMBL" id="CP000312">
    <property type="protein sequence ID" value="ABG86476.1"/>
    <property type="molecule type" value="Genomic_DNA"/>
</dbReference>
<dbReference type="RefSeq" id="WP_011592606.1">
    <property type="nucleotide sequence ID" value="NC_008262.1"/>
</dbReference>
<dbReference type="SMR" id="Q0SSB1"/>
<dbReference type="KEGG" id="cpr:CPR_1681"/>
<dbReference type="Proteomes" id="UP000001824">
    <property type="component" value="Chromosome"/>
</dbReference>
<dbReference type="GO" id="GO:0005829">
    <property type="term" value="C:cytosol"/>
    <property type="evidence" value="ECO:0007669"/>
    <property type="project" value="TreeGrafter"/>
</dbReference>
<dbReference type="GO" id="GO:0052906">
    <property type="term" value="F:tRNA (guanine(37)-N1)-methyltransferase activity"/>
    <property type="evidence" value="ECO:0007669"/>
    <property type="project" value="UniProtKB-UniRule"/>
</dbReference>
<dbReference type="GO" id="GO:0002939">
    <property type="term" value="P:tRNA N1-guanine methylation"/>
    <property type="evidence" value="ECO:0007669"/>
    <property type="project" value="TreeGrafter"/>
</dbReference>
<dbReference type="CDD" id="cd18080">
    <property type="entry name" value="TrmD-like"/>
    <property type="match status" value="1"/>
</dbReference>
<dbReference type="FunFam" id="1.10.1270.20:FF:000001">
    <property type="entry name" value="tRNA (guanine-N(1)-)-methyltransferase"/>
    <property type="match status" value="1"/>
</dbReference>
<dbReference type="FunFam" id="3.40.1280.10:FF:000001">
    <property type="entry name" value="tRNA (guanine-N(1)-)-methyltransferase"/>
    <property type="match status" value="1"/>
</dbReference>
<dbReference type="Gene3D" id="3.40.1280.10">
    <property type="match status" value="1"/>
</dbReference>
<dbReference type="Gene3D" id="1.10.1270.20">
    <property type="entry name" value="tRNA(m1g37)methyltransferase, domain 2"/>
    <property type="match status" value="1"/>
</dbReference>
<dbReference type="HAMAP" id="MF_00605">
    <property type="entry name" value="TrmD"/>
    <property type="match status" value="1"/>
</dbReference>
<dbReference type="InterPro" id="IPR029028">
    <property type="entry name" value="Alpha/beta_knot_MTases"/>
</dbReference>
<dbReference type="InterPro" id="IPR023148">
    <property type="entry name" value="tRNA_m1G_MeTrfase_C_sf"/>
</dbReference>
<dbReference type="InterPro" id="IPR002649">
    <property type="entry name" value="tRNA_m1G_MeTrfase_TrmD"/>
</dbReference>
<dbReference type="InterPro" id="IPR029026">
    <property type="entry name" value="tRNA_m1G_MTases_N"/>
</dbReference>
<dbReference type="InterPro" id="IPR016009">
    <property type="entry name" value="tRNA_MeTrfase_TRMD/TRM10"/>
</dbReference>
<dbReference type="NCBIfam" id="NF000648">
    <property type="entry name" value="PRK00026.1"/>
    <property type="match status" value="1"/>
</dbReference>
<dbReference type="NCBIfam" id="TIGR00088">
    <property type="entry name" value="trmD"/>
    <property type="match status" value="1"/>
</dbReference>
<dbReference type="PANTHER" id="PTHR46417">
    <property type="entry name" value="TRNA (GUANINE-N(1)-)-METHYLTRANSFERASE"/>
    <property type="match status" value="1"/>
</dbReference>
<dbReference type="PANTHER" id="PTHR46417:SF1">
    <property type="entry name" value="TRNA (GUANINE-N(1)-)-METHYLTRANSFERASE"/>
    <property type="match status" value="1"/>
</dbReference>
<dbReference type="Pfam" id="PF01746">
    <property type="entry name" value="tRNA_m1G_MT"/>
    <property type="match status" value="1"/>
</dbReference>
<dbReference type="PIRSF" id="PIRSF000386">
    <property type="entry name" value="tRNA_mtase"/>
    <property type="match status" value="1"/>
</dbReference>
<dbReference type="SUPFAM" id="SSF75217">
    <property type="entry name" value="alpha/beta knot"/>
    <property type="match status" value="1"/>
</dbReference>
<evidence type="ECO:0000255" key="1">
    <source>
        <dbReference type="HAMAP-Rule" id="MF_00605"/>
    </source>
</evidence>
<feature type="chain" id="PRO_0000257407" description="tRNA (guanine-N(1)-)-methyltransferase">
    <location>
        <begin position="1"/>
        <end position="236"/>
    </location>
</feature>
<feature type="binding site" evidence="1">
    <location>
        <position position="110"/>
    </location>
    <ligand>
        <name>S-adenosyl-L-methionine</name>
        <dbReference type="ChEBI" id="CHEBI:59789"/>
    </ligand>
</feature>
<feature type="binding site" evidence="1">
    <location>
        <begin position="129"/>
        <end position="134"/>
    </location>
    <ligand>
        <name>S-adenosyl-L-methionine</name>
        <dbReference type="ChEBI" id="CHEBI:59789"/>
    </ligand>
</feature>
<name>TRMD_CLOPS</name>
<organism>
    <name type="scientific">Clostridium perfringens (strain SM101 / Type A)</name>
    <dbReference type="NCBI Taxonomy" id="289380"/>
    <lineage>
        <taxon>Bacteria</taxon>
        <taxon>Bacillati</taxon>
        <taxon>Bacillota</taxon>
        <taxon>Clostridia</taxon>
        <taxon>Eubacteriales</taxon>
        <taxon>Clostridiaceae</taxon>
        <taxon>Clostridium</taxon>
    </lineage>
</organism>
<accession>Q0SSB1</accession>
<comment type="function">
    <text evidence="1">Specifically methylates guanosine-37 in various tRNAs.</text>
</comment>
<comment type="catalytic activity">
    <reaction evidence="1">
        <text>guanosine(37) in tRNA + S-adenosyl-L-methionine = N(1)-methylguanosine(37) in tRNA + S-adenosyl-L-homocysteine + H(+)</text>
        <dbReference type="Rhea" id="RHEA:36899"/>
        <dbReference type="Rhea" id="RHEA-COMP:10145"/>
        <dbReference type="Rhea" id="RHEA-COMP:10147"/>
        <dbReference type="ChEBI" id="CHEBI:15378"/>
        <dbReference type="ChEBI" id="CHEBI:57856"/>
        <dbReference type="ChEBI" id="CHEBI:59789"/>
        <dbReference type="ChEBI" id="CHEBI:73542"/>
        <dbReference type="ChEBI" id="CHEBI:74269"/>
        <dbReference type="EC" id="2.1.1.228"/>
    </reaction>
</comment>
<comment type="subunit">
    <text evidence="1">Homodimer.</text>
</comment>
<comment type="subcellular location">
    <subcellularLocation>
        <location evidence="1">Cytoplasm</location>
    </subcellularLocation>
</comment>
<comment type="similarity">
    <text evidence="1">Belongs to the RNA methyltransferase TrmD family.</text>
</comment>
<sequence>MKINILTLFPEMFDIFKHSIIGRARENGFLHIETVNIRDYTLNKHKKVDDYPYGGGAGMVMTPQPIVDAIKAVKEKNKGKVIFLGPRGKTFNQEMAKELSKEEELIFVCGHYEGIDQRIYKYFDLEISLGDFVLTGGEMACIPVIDSISRLVPGVLGSEESFQDESYYDGTLEYPQYTRPFEFEGEKVPEVLISGHHENIRKWRRKESLLITKERRPDMFEKIKLSKEDIKLLKSK</sequence>
<keyword id="KW-0963">Cytoplasm</keyword>
<keyword id="KW-0489">Methyltransferase</keyword>
<keyword id="KW-0949">S-adenosyl-L-methionine</keyword>
<keyword id="KW-0808">Transferase</keyword>
<keyword id="KW-0819">tRNA processing</keyword>
<proteinExistence type="inferred from homology"/>
<protein>
    <recommendedName>
        <fullName evidence="1">tRNA (guanine-N(1)-)-methyltransferase</fullName>
        <ecNumber evidence="1">2.1.1.228</ecNumber>
    </recommendedName>
    <alternativeName>
        <fullName evidence="1">M1G-methyltransferase</fullName>
    </alternativeName>
    <alternativeName>
        <fullName evidence="1">tRNA [GM37] methyltransferase</fullName>
    </alternativeName>
</protein>
<reference key="1">
    <citation type="journal article" date="2006" name="Genome Res.">
        <title>Skewed genomic variability in strains of the toxigenic bacterial pathogen, Clostridium perfringens.</title>
        <authorList>
            <person name="Myers G.S.A."/>
            <person name="Rasko D.A."/>
            <person name="Cheung J.K."/>
            <person name="Ravel J."/>
            <person name="Seshadri R."/>
            <person name="DeBoy R.T."/>
            <person name="Ren Q."/>
            <person name="Varga J."/>
            <person name="Awad M.M."/>
            <person name="Brinkac L.M."/>
            <person name="Daugherty S.C."/>
            <person name="Haft D.H."/>
            <person name="Dodson R.J."/>
            <person name="Madupu R."/>
            <person name="Nelson W.C."/>
            <person name="Rosovitz M.J."/>
            <person name="Sullivan S.A."/>
            <person name="Khouri H."/>
            <person name="Dimitrov G.I."/>
            <person name="Watkins K.L."/>
            <person name="Mulligan S."/>
            <person name="Benton J."/>
            <person name="Radune D."/>
            <person name="Fisher D.J."/>
            <person name="Atkins H.S."/>
            <person name="Hiscox T."/>
            <person name="Jost B.H."/>
            <person name="Billington S.J."/>
            <person name="Songer J.G."/>
            <person name="McClane B.A."/>
            <person name="Titball R.W."/>
            <person name="Rood J.I."/>
            <person name="Melville S.B."/>
            <person name="Paulsen I.T."/>
        </authorList>
    </citation>
    <scope>NUCLEOTIDE SEQUENCE [LARGE SCALE GENOMIC DNA]</scope>
    <source>
        <strain>SM101 / Type A</strain>
    </source>
</reference>
<gene>
    <name evidence="1" type="primary">trmD</name>
    <name type="ordered locus">CPR_1681</name>
</gene>